<feature type="chain" id="PRO_1000006242" description="Serine hydroxymethyltransferase">
    <location>
        <begin position="1"/>
        <end position="434"/>
    </location>
</feature>
<feature type="binding site" evidence="1">
    <location>
        <position position="128"/>
    </location>
    <ligand>
        <name>(6S)-5,6,7,8-tetrahydrofolate</name>
        <dbReference type="ChEBI" id="CHEBI:57453"/>
    </ligand>
</feature>
<feature type="binding site" evidence="1">
    <location>
        <begin position="132"/>
        <end position="134"/>
    </location>
    <ligand>
        <name>(6S)-5,6,7,8-tetrahydrofolate</name>
        <dbReference type="ChEBI" id="CHEBI:57453"/>
    </ligand>
</feature>
<feature type="site" description="Plays an important role in substrate specificity" evidence="1">
    <location>
        <position position="236"/>
    </location>
</feature>
<feature type="modified residue" description="N6-(pyridoxal phosphate)lysine" evidence="1">
    <location>
        <position position="237"/>
    </location>
</feature>
<evidence type="ECO:0000255" key="1">
    <source>
        <dbReference type="HAMAP-Rule" id="MF_00051"/>
    </source>
</evidence>
<protein>
    <recommendedName>
        <fullName evidence="1">Serine hydroxymethyltransferase</fullName>
        <shortName evidence="1">SHMT</shortName>
        <shortName evidence="1">Serine methylase</shortName>
        <ecNumber evidence="1">2.1.2.1</ecNumber>
    </recommendedName>
</protein>
<reference key="1">
    <citation type="journal article" date="2007" name="Microbiology">
        <title>Comparative analysis of the Corynebacterium glutamicum group and complete genome sequence of strain R.</title>
        <authorList>
            <person name="Yukawa H."/>
            <person name="Omumasaba C.A."/>
            <person name="Nonaka H."/>
            <person name="Kos P."/>
            <person name="Okai N."/>
            <person name="Suzuki N."/>
            <person name="Suda M."/>
            <person name="Tsuge Y."/>
            <person name="Watanabe J."/>
            <person name="Ikeda Y."/>
            <person name="Vertes A.A."/>
            <person name="Inui M."/>
        </authorList>
    </citation>
    <scope>NUCLEOTIDE SEQUENCE [LARGE SCALE GENOMIC DNA]</scope>
    <source>
        <strain>R</strain>
    </source>
</reference>
<sequence length="434" mass="46541">MTDAHQADDVRYQPLNELDPEVAAAIAGELARQRDTLEMIASENFVPRSVLQAQGSVLTNKYAEGYPGRRYYGGCEQVDIIEDLARDRAKALFGAEFANVQPHSGAQANAAVLMTLAEPGDKIMGLSLAHGGHLTHGMKLNFSGKLYEVVAYGVDPETMRVDMDQVREIALKEQPKVIIAGWSAYPRHLDFEAFQSIAAEVGAKLWVDMAHFAGLVAAGLHPSPVPYSDVVSSTVHKTLGGPRSGIILAKQEYAKKLNSSVFPGQQGGPLMHAVAAKATSLKIAGTEQFRDRQARTLEGARILAERLTASDAKAAGVDVLTGGTDVHLVLADLRNSQMDGQQAEDLLHEVGITVNRNAVPFDPRPPMVTSGLRIGTPALATRGFDIPAFTEVADIIGTALANGKSADIESLRGRVAKLAADYPLYEGLEDWTIV</sequence>
<organism>
    <name type="scientific">Corynebacterium glutamicum (strain R)</name>
    <dbReference type="NCBI Taxonomy" id="340322"/>
    <lineage>
        <taxon>Bacteria</taxon>
        <taxon>Bacillati</taxon>
        <taxon>Actinomycetota</taxon>
        <taxon>Actinomycetes</taxon>
        <taxon>Mycobacteriales</taxon>
        <taxon>Corynebacteriaceae</taxon>
        <taxon>Corynebacterium</taxon>
    </lineage>
</organism>
<name>GLYA_CORGB</name>
<accession>A4QCW6</accession>
<comment type="function">
    <text evidence="1">Catalyzes the reversible interconversion of serine and glycine with tetrahydrofolate (THF) serving as the one-carbon carrier. This reaction serves as the major source of one-carbon groups required for the biosynthesis of purines, thymidylate, methionine, and other important biomolecules. Also exhibits THF-independent aldolase activity toward beta-hydroxyamino acids, producing glycine and aldehydes, via a retro-aldol mechanism.</text>
</comment>
<comment type="catalytic activity">
    <reaction evidence="1">
        <text>(6R)-5,10-methylene-5,6,7,8-tetrahydrofolate + glycine + H2O = (6S)-5,6,7,8-tetrahydrofolate + L-serine</text>
        <dbReference type="Rhea" id="RHEA:15481"/>
        <dbReference type="ChEBI" id="CHEBI:15377"/>
        <dbReference type="ChEBI" id="CHEBI:15636"/>
        <dbReference type="ChEBI" id="CHEBI:33384"/>
        <dbReference type="ChEBI" id="CHEBI:57305"/>
        <dbReference type="ChEBI" id="CHEBI:57453"/>
        <dbReference type="EC" id="2.1.2.1"/>
    </reaction>
</comment>
<comment type="cofactor">
    <cofactor evidence="1">
        <name>pyridoxal 5'-phosphate</name>
        <dbReference type="ChEBI" id="CHEBI:597326"/>
    </cofactor>
</comment>
<comment type="pathway">
    <text evidence="1">One-carbon metabolism; tetrahydrofolate interconversion.</text>
</comment>
<comment type="pathway">
    <text evidence="1">Amino-acid biosynthesis; glycine biosynthesis; glycine from L-serine: step 1/1.</text>
</comment>
<comment type="subunit">
    <text evidence="1">Homodimer.</text>
</comment>
<comment type="subcellular location">
    <subcellularLocation>
        <location evidence="1">Cytoplasm</location>
    </subcellularLocation>
</comment>
<comment type="similarity">
    <text evidence="1">Belongs to the SHMT family.</text>
</comment>
<proteinExistence type="inferred from homology"/>
<dbReference type="EC" id="2.1.2.1" evidence="1"/>
<dbReference type="EMBL" id="AP009044">
    <property type="protein sequence ID" value="BAF54063.1"/>
    <property type="molecule type" value="Genomic_DNA"/>
</dbReference>
<dbReference type="RefSeq" id="WP_003856790.1">
    <property type="nucleotide sequence ID" value="NC_009342.1"/>
</dbReference>
<dbReference type="SMR" id="A4QCW6"/>
<dbReference type="GeneID" id="1018983"/>
<dbReference type="KEGG" id="cgt:cgR_1087"/>
<dbReference type="HOGENOM" id="CLU_022477_2_1_11"/>
<dbReference type="PhylomeDB" id="A4QCW6"/>
<dbReference type="UniPathway" id="UPA00193"/>
<dbReference type="UniPathway" id="UPA00288">
    <property type="reaction ID" value="UER01023"/>
</dbReference>
<dbReference type="Proteomes" id="UP000006698">
    <property type="component" value="Chromosome"/>
</dbReference>
<dbReference type="GO" id="GO:0005829">
    <property type="term" value="C:cytosol"/>
    <property type="evidence" value="ECO:0007669"/>
    <property type="project" value="TreeGrafter"/>
</dbReference>
<dbReference type="GO" id="GO:0004372">
    <property type="term" value="F:glycine hydroxymethyltransferase activity"/>
    <property type="evidence" value="ECO:0007669"/>
    <property type="project" value="UniProtKB-UniRule"/>
</dbReference>
<dbReference type="GO" id="GO:0030170">
    <property type="term" value="F:pyridoxal phosphate binding"/>
    <property type="evidence" value="ECO:0007669"/>
    <property type="project" value="UniProtKB-UniRule"/>
</dbReference>
<dbReference type="GO" id="GO:0019264">
    <property type="term" value="P:glycine biosynthetic process from serine"/>
    <property type="evidence" value="ECO:0007669"/>
    <property type="project" value="UniProtKB-UniRule"/>
</dbReference>
<dbReference type="GO" id="GO:0035999">
    <property type="term" value="P:tetrahydrofolate interconversion"/>
    <property type="evidence" value="ECO:0007669"/>
    <property type="project" value="UniProtKB-UniRule"/>
</dbReference>
<dbReference type="CDD" id="cd00378">
    <property type="entry name" value="SHMT"/>
    <property type="match status" value="1"/>
</dbReference>
<dbReference type="FunFam" id="3.40.640.10:FF:000001">
    <property type="entry name" value="Serine hydroxymethyltransferase"/>
    <property type="match status" value="1"/>
</dbReference>
<dbReference type="Gene3D" id="3.90.1150.10">
    <property type="entry name" value="Aspartate Aminotransferase, domain 1"/>
    <property type="match status" value="1"/>
</dbReference>
<dbReference type="Gene3D" id="3.40.640.10">
    <property type="entry name" value="Type I PLP-dependent aspartate aminotransferase-like (Major domain)"/>
    <property type="match status" value="1"/>
</dbReference>
<dbReference type="HAMAP" id="MF_00051">
    <property type="entry name" value="SHMT"/>
    <property type="match status" value="1"/>
</dbReference>
<dbReference type="InterPro" id="IPR015424">
    <property type="entry name" value="PyrdxlP-dep_Trfase"/>
</dbReference>
<dbReference type="InterPro" id="IPR015421">
    <property type="entry name" value="PyrdxlP-dep_Trfase_major"/>
</dbReference>
<dbReference type="InterPro" id="IPR015422">
    <property type="entry name" value="PyrdxlP-dep_Trfase_small"/>
</dbReference>
<dbReference type="InterPro" id="IPR001085">
    <property type="entry name" value="Ser_HO-MeTrfase"/>
</dbReference>
<dbReference type="InterPro" id="IPR049943">
    <property type="entry name" value="Ser_HO-MeTrfase-like"/>
</dbReference>
<dbReference type="InterPro" id="IPR019798">
    <property type="entry name" value="Ser_HO-MeTrfase_PLP_BS"/>
</dbReference>
<dbReference type="InterPro" id="IPR039429">
    <property type="entry name" value="SHMT-like_dom"/>
</dbReference>
<dbReference type="NCBIfam" id="NF000586">
    <property type="entry name" value="PRK00011.1"/>
    <property type="match status" value="1"/>
</dbReference>
<dbReference type="PANTHER" id="PTHR11680">
    <property type="entry name" value="SERINE HYDROXYMETHYLTRANSFERASE"/>
    <property type="match status" value="1"/>
</dbReference>
<dbReference type="PANTHER" id="PTHR11680:SF35">
    <property type="entry name" value="SERINE HYDROXYMETHYLTRANSFERASE 1"/>
    <property type="match status" value="1"/>
</dbReference>
<dbReference type="Pfam" id="PF00464">
    <property type="entry name" value="SHMT"/>
    <property type="match status" value="1"/>
</dbReference>
<dbReference type="PIRSF" id="PIRSF000412">
    <property type="entry name" value="SHMT"/>
    <property type="match status" value="1"/>
</dbReference>
<dbReference type="SUPFAM" id="SSF53383">
    <property type="entry name" value="PLP-dependent transferases"/>
    <property type="match status" value="1"/>
</dbReference>
<dbReference type="PROSITE" id="PS00096">
    <property type="entry name" value="SHMT"/>
    <property type="match status" value="1"/>
</dbReference>
<gene>
    <name evidence="1" type="primary">glyA</name>
    <name type="ordered locus">cgR_1087</name>
</gene>
<keyword id="KW-0028">Amino-acid biosynthesis</keyword>
<keyword id="KW-0963">Cytoplasm</keyword>
<keyword id="KW-0554">One-carbon metabolism</keyword>
<keyword id="KW-0663">Pyridoxal phosphate</keyword>
<keyword id="KW-0808">Transferase</keyword>